<comment type="function">
    <text evidence="1">Deubiquitinating enzyme. Has almost no deubiquitinating activity by itself and requires the interaction with wdr48 to have a high activity.</text>
</comment>
<comment type="catalytic activity">
    <reaction evidence="1">
        <text>Thiol-dependent hydrolysis of ester, thioester, amide, peptide and isopeptide bonds formed by the C-terminal Gly of ubiquitin (a 76-residue protein attached to proteins as an intracellular targeting signal).</text>
        <dbReference type="EC" id="3.4.19.12"/>
    </reaction>
</comment>
<comment type="subunit">
    <text evidence="1">Interacts with WDR48.</text>
</comment>
<comment type="similarity">
    <text evidence="5">Belongs to the peptidase C19 family. USP12/USP46 subfamily.</text>
</comment>
<gene>
    <name type="primary">usp12</name>
</gene>
<name>UBP12_SALSA</name>
<accession>C0HB46</accession>
<accession>B5X1J2</accession>
<reference key="1">
    <citation type="journal article" date="2010" name="BMC Genomics">
        <title>Salmo salar and Esox lucius full-length cDNA sequences reveal changes in evolutionary pressures on a post-tetraploidization genome.</title>
        <authorList>
            <person name="Leong J.S."/>
            <person name="Jantzen S.G."/>
            <person name="von Schalburg K.R."/>
            <person name="Cooper G.A."/>
            <person name="Messmer A.M."/>
            <person name="Liao N.Y."/>
            <person name="Munro S."/>
            <person name="Moore R."/>
            <person name="Holt R.A."/>
            <person name="Jones S.J."/>
            <person name="Davidson W.S."/>
            <person name="Koop B.F."/>
        </authorList>
    </citation>
    <scope>NUCLEOTIDE SEQUENCE [LARGE SCALE MRNA]</scope>
    <source>
        <tissue>Brain</tissue>
    </source>
</reference>
<proteinExistence type="evidence at transcript level"/>
<evidence type="ECO:0000250" key="1">
    <source>
        <dbReference type="UniProtKB" id="O75317"/>
    </source>
</evidence>
<evidence type="ECO:0000255" key="2">
    <source>
        <dbReference type="PROSITE-ProRule" id="PRU10092"/>
    </source>
</evidence>
<evidence type="ECO:0000255" key="3">
    <source>
        <dbReference type="PROSITE-ProRule" id="PRU10093"/>
    </source>
</evidence>
<evidence type="ECO:0000256" key="4">
    <source>
        <dbReference type="SAM" id="MobiDB-lite"/>
    </source>
</evidence>
<evidence type="ECO:0000305" key="5"/>
<dbReference type="EC" id="3.4.19.12" evidence="1"/>
<dbReference type="EMBL" id="BT044911">
    <property type="protein sequence ID" value="ACI33173.1"/>
    <property type="molecule type" value="mRNA"/>
</dbReference>
<dbReference type="EMBL" id="BT059552">
    <property type="protein sequence ID" value="ACN11265.1"/>
    <property type="molecule type" value="mRNA"/>
</dbReference>
<dbReference type="RefSeq" id="NP_001133405.1">
    <property type="nucleotide sequence ID" value="NM_001139933.1"/>
</dbReference>
<dbReference type="RefSeq" id="XP_014014921.1">
    <property type="nucleotide sequence ID" value="XM_014159446.1"/>
</dbReference>
<dbReference type="SMR" id="C0HB46"/>
<dbReference type="STRING" id="8030.ENSSSAP00000020383"/>
<dbReference type="PaxDb" id="8030-ENSSSAP00000020383"/>
<dbReference type="Ensembl" id="ENSSSAT00070012985">
    <property type="protein sequence ID" value="ENSSSAP00070012306"/>
    <property type="gene ID" value="ENSSSAG00070008358"/>
</dbReference>
<dbReference type="Ensembl" id="ENSSSAT00075034681">
    <property type="protein sequence ID" value="ENSSSAP00075024052"/>
    <property type="gene ID" value="ENSSSAG00075016770"/>
</dbReference>
<dbReference type="GeneID" id="100194904"/>
<dbReference type="KEGG" id="sasa:100194904"/>
<dbReference type="KEGG" id="sasa:106590448"/>
<dbReference type="CTD" id="565736"/>
<dbReference type="OrthoDB" id="212109at7898"/>
<dbReference type="Proteomes" id="UP000087266">
    <property type="component" value="Chromosome ssa19"/>
</dbReference>
<dbReference type="Proteomes" id="UP000087266">
    <property type="component" value="Chromosome ssa29"/>
</dbReference>
<dbReference type="Bgee" id="ENSSSAG00000060005">
    <property type="expression patterns" value="Expressed in notochord and 23 other cell types or tissues"/>
</dbReference>
<dbReference type="GO" id="GO:0005737">
    <property type="term" value="C:cytoplasm"/>
    <property type="evidence" value="ECO:0000250"/>
    <property type="project" value="UniProtKB"/>
</dbReference>
<dbReference type="GO" id="GO:0005829">
    <property type="term" value="C:cytosol"/>
    <property type="evidence" value="ECO:0007669"/>
    <property type="project" value="TreeGrafter"/>
</dbReference>
<dbReference type="GO" id="GO:0005634">
    <property type="term" value="C:nucleus"/>
    <property type="evidence" value="ECO:0000250"/>
    <property type="project" value="UniProtKB"/>
</dbReference>
<dbReference type="GO" id="GO:0005886">
    <property type="term" value="C:plasma membrane"/>
    <property type="evidence" value="ECO:0000250"/>
    <property type="project" value="UniProtKB"/>
</dbReference>
<dbReference type="GO" id="GO:0004843">
    <property type="term" value="F:cysteine-type deubiquitinase activity"/>
    <property type="evidence" value="ECO:0000250"/>
    <property type="project" value="UniProtKB"/>
</dbReference>
<dbReference type="GO" id="GO:0004197">
    <property type="term" value="F:cysteine-type endopeptidase activity"/>
    <property type="evidence" value="ECO:0000250"/>
    <property type="project" value="UniProtKB"/>
</dbReference>
<dbReference type="GO" id="GO:0046872">
    <property type="term" value="F:metal ion binding"/>
    <property type="evidence" value="ECO:0007669"/>
    <property type="project" value="UniProtKB-KW"/>
</dbReference>
<dbReference type="GO" id="GO:0016579">
    <property type="term" value="P:protein deubiquitination"/>
    <property type="evidence" value="ECO:0000250"/>
    <property type="project" value="UniProtKB"/>
</dbReference>
<dbReference type="GO" id="GO:0006508">
    <property type="term" value="P:proteolysis"/>
    <property type="evidence" value="ECO:0007669"/>
    <property type="project" value="UniProtKB-KW"/>
</dbReference>
<dbReference type="CDD" id="cd02663">
    <property type="entry name" value="Peptidase_C19G"/>
    <property type="match status" value="1"/>
</dbReference>
<dbReference type="FunFam" id="3.90.70.10:FF:000003">
    <property type="entry name" value="Ubiquitin carboxyl-terminal hydrolase 46"/>
    <property type="match status" value="1"/>
</dbReference>
<dbReference type="Gene3D" id="3.90.70.10">
    <property type="entry name" value="Cysteine proteinases"/>
    <property type="match status" value="1"/>
</dbReference>
<dbReference type="InterPro" id="IPR038765">
    <property type="entry name" value="Papain-like_cys_pep_sf"/>
</dbReference>
<dbReference type="InterPro" id="IPR050164">
    <property type="entry name" value="Peptidase_C19"/>
</dbReference>
<dbReference type="InterPro" id="IPR001394">
    <property type="entry name" value="Peptidase_C19_UCH"/>
</dbReference>
<dbReference type="InterPro" id="IPR018200">
    <property type="entry name" value="USP_CS"/>
</dbReference>
<dbReference type="InterPro" id="IPR028889">
    <property type="entry name" value="USP_dom"/>
</dbReference>
<dbReference type="PANTHER" id="PTHR24006">
    <property type="entry name" value="UBIQUITIN CARBOXYL-TERMINAL HYDROLASE"/>
    <property type="match status" value="1"/>
</dbReference>
<dbReference type="PANTHER" id="PTHR24006:SF647">
    <property type="entry name" value="UBIQUITIN CARBOXYL-TERMINAL HYDROLASE 12"/>
    <property type="match status" value="1"/>
</dbReference>
<dbReference type="Pfam" id="PF00443">
    <property type="entry name" value="UCH"/>
    <property type="match status" value="1"/>
</dbReference>
<dbReference type="SUPFAM" id="SSF54001">
    <property type="entry name" value="Cysteine proteinases"/>
    <property type="match status" value="1"/>
</dbReference>
<dbReference type="PROSITE" id="PS00972">
    <property type="entry name" value="USP_1"/>
    <property type="match status" value="1"/>
</dbReference>
<dbReference type="PROSITE" id="PS00973">
    <property type="entry name" value="USP_2"/>
    <property type="match status" value="1"/>
</dbReference>
<dbReference type="PROSITE" id="PS50235">
    <property type="entry name" value="USP_3"/>
    <property type="match status" value="1"/>
</dbReference>
<keyword id="KW-0378">Hydrolase</keyword>
<keyword id="KW-0479">Metal-binding</keyword>
<keyword id="KW-0645">Protease</keyword>
<keyword id="KW-1185">Reference proteome</keyword>
<keyword id="KW-0788">Thiol protease</keyword>
<keyword id="KW-0833">Ubl conjugation pathway</keyword>
<keyword id="KW-0862">Zinc</keyword>
<feature type="chain" id="PRO_0000378992" description="Ubiquitin carboxyl-terminal hydrolase 12">
    <location>
        <begin position="1"/>
        <end position="372"/>
    </location>
</feature>
<feature type="domain" description="USP">
    <location>
        <begin position="39"/>
        <end position="371"/>
    </location>
</feature>
<feature type="region of interest" description="Disordered" evidence="4">
    <location>
        <begin position="150"/>
        <end position="169"/>
    </location>
</feature>
<feature type="compositionally biased region" description="Polar residues" evidence="4">
    <location>
        <begin position="157"/>
        <end position="166"/>
    </location>
</feature>
<feature type="active site" description="Nucleophile" evidence="2 3">
    <location>
        <position position="48"/>
    </location>
</feature>
<feature type="active site" description="Proton acceptor" evidence="2 3">
    <location>
        <position position="319"/>
    </location>
</feature>
<feature type="binding site" evidence="1">
    <location>
        <position position="188"/>
    </location>
    <ligand>
        <name>Zn(2+)</name>
        <dbReference type="ChEBI" id="CHEBI:29105"/>
    </ligand>
</feature>
<feature type="binding site" evidence="1">
    <location>
        <position position="191"/>
    </location>
    <ligand>
        <name>Zn(2+)</name>
        <dbReference type="ChEBI" id="CHEBI:29105"/>
    </ligand>
</feature>
<feature type="binding site" evidence="1">
    <location>
        <position position="235"/>
    </location>
    <ligand>
        <name>Zn(2+)</name>
        <dbReference type="ChEBI" id="CHEBI:29105"/>
    </ligand>
</feature>
<feature type="binding site" evidence="1">
    <location>
        <position position="238"/>
    </location>
    <ligand>
        <name>Zn(2+)</name>
        <dbReference type="ChEBI" id="CHEBI:29105"/>
    </ligand>
</feature>
<feature type="sequence conflict" description="In Ref. 1; ACI33173." evidence="5" ref="1">
    <original>H</original>
    <variation>N</variation>
    <location>
        <position position="163"/>
    </location>
</feature>
<protein>
    <recommendedName>
        <fullName>Ubiquitin carboxyl-terminal hydrolase 12</fullName>
        <ecNumber evidence="1">3.4.19.12</ecNumber>
    </recommendedName>
    <alternativeName>
        <fullName>Deubiquitinating enzyme 12</fullName>
    </alternativeName>
    <alternativeName>
        <fullName>Ubiquitin thioesterase 12</fullName>
    </alternativeName>
    <alternativeName>
        <fullName>Ubiquitin-specific-processing protease 12</fullName>
    </alternativeName>
</protein>
<organism>
    <name type="scientific">Salmo salar</name>
    <name type="common">Atlantic salmon</name>
    <dbReference type="NCBI Taxonomy" id="8030"/>
    <lineage>
        <taxon>Eukaryota</taxon>
        <taxon>Metazoa</taxon>
        <taxon>Chordata</taxon>
        <taxon>Craniata</taxon>
        <taxon>Vertebrata</taxon>
        <taxon>Euteleostomi</taxon>
        <taxon>Actinopterygii</taxon>
        <taxon>Neopterygii</taxon>
        <taxon>Teleostei</taxon>
        <taxon>Protacanthopterygii</taxon>
        <taxon>Salmoniformes</taxon>
        <taxon>Salmonidae</taxon>
        <taxon>Salmoninae</taxon>
        <taxon>Salmo</taxon>
    </lineage>
</organism>
<sequence>MEILMTVSKFASFCTMGANASALEKEIGSEQFPVNEHYFGLVNFGNTCYCNSVLQALYFCRPFREKILAYRSQPRRKENLLTCLADLFHSIANQKRKVGVIPPKKFITRLRKENELFDNYMQQDAHEFLNYLLNTIADLLQEERKQDKTNGRLANGSLDSQNHNSNAPPPSTWVHEIFQGTLTNETRCLTCETISSKDEDFLDLSVDVEQNTSITHCLRGFSNTETLCSEYKYYCEECRSKQEAHKRMRVKKLPMILALHLKRFKYMEQLQRYTKLSYRVVFPLELRLFNTSGDATNPERLYDLVAVVVHCGSGPNRGHYIAIVKSHDFWLLFDDDIVEKIDAQAIEEFYGLTSEISKNSESGYILFYQSRD</sequence>